<protein>
    <recommendedName>
        <fullName>14-3-3 protein eta</fullName>
    </recommendedName>
    <alternativeName>
        <fullName>Protein AS1</fullName>
    </alternativeName>
</protein>
<sequence length="246" mass="28219">MGDREQLLQRARLAEQAERYDDMASAMKAVTELNEPLSNEDRNLLSVAYKNVVGARRSSWRVISSIEQKTMADGNEKKLEKVKAYREKIEKELETVCNDVLSLLDKFLIKNCNDFQYESKVFYLKMKGDYYRYLAEVASGEKKNSVVEASEAAYKEAFEISKEQMQPTHPIRLGLALNFSVFYYEIQNAPEQACLLAKQAFDDAIAELDTLNEDSYKDSTLIMQLLRDNLTLWTSDQQDEEAGEGN</sequence>
<feature type="initiator methionine" description="Removed" evidence="5 14">
    <location>
        <position position="1"/>
    </location>
</feature>
<feature type="chain" id="PRO_0000058623" description="14-3-3 protein eta">
    <location>
        <begin position="2"/>
        <end position="246"/>
    </location>
</feature>
<feature type="site" description="Interaction with phosphoserine on interacting protein">
    <location>
        <position position="57"/>
    </location>
</feature>
<feature type="site" description="Interaction with phosphoserine on interacting protein">
    <location>
        <position position="132"/>
    </location>
</feature>
<feature type="modified residue" description="N-acetylglycine" evidence="14">
    <location>
        <position position="2"/>
    </location>
</feature>
<feature type="modified residue" description="Phosphoserine" evidence="16">
    <location>
        <position position="25"/>
    </location>
</feature>
<feature type="modified residue" description="Phosphoserine" evidence="2">
    <location>
        <position position="59"/>
    </location>
</feature>
<feature type="sequence conflict" description="In Ref. 9; CAA40620." evidence="15" ref="9">
    <original>N</original>
    <variation>T</variation>
    <location>
        <position position="144"/>
    </location>
</feature>
<feature type="sequence conflict" description="In Ref. 1; AAA35483." evidence="15" ref="1">
    <original>A</original>
    <variation>G</variation>
    <location>
        <position position="157"/>
    </location>
</feature>
<feature type="sequence conflict" description="In Ref. 1; AAA35483." evidence="15" ref="1">
    <original>Q</original>
    <variation>L</variation>
    <location>
        <position position="237"/>
    </location>
</feature>
<feature type="helix" evidence="17">
    <location>
        <begin position="4"/>
        <end position="16"/>
    </location>
</feature>
<feature type="helix" evidence="17">
    <location>
        <begin position="20"/>
        <end position="31"/>
    </location>
</feature>
<feature type="helix" evidence="17">
    <location>
        <begin position="39"/>
        <end position="73"/>
    </location>
</feature>
<feature type="helix" evidence="17">
    <location>
        <begin position="76"/>
        <end position="106"/>
    </location>
</feature>
<feature type="turn" evidence="17">
    <location>
        <begin position="107"/>
        <end position="111"/>
    </location>
</feature>
<feature type="helix" evidence="17">
    <location>
        <begin position="117"/>
        <end position="137"/>
    </location>
</feature>
<feature type="helix" evidence="17">
    <location>
        <begin position="140"/>
        <end position="164"/>
    </location>
</feature>
<feature type="helix" evidence="17">
    <location>
        <begin position="170"/>
        <end position="185"/>
    </location>
</feature>
<feature type="helix" evidence="17">
    <location>
        <begin position="190"/>
        <end position="206"/>
    </location>
</feature>
<feature type="helix" evidence="17">
    <location>
        <begin position="207"/>
        <end position="210"/>
    </location>
</feature>
<feature type="turn" evidence="17">
    <location>
        <begin position="213"/>
        <end position="215"/>
    </location>
</feature>
<feature type="helix" evidence="17">
    <location>
        <begin position="216"/>
        <end position="234"/>
    </location>
</feature>
<accession>Q04917</accession>
<reference key="1">
    <citation type="journal article" date="1993" name="Biochim. Biophys. Acta">
        <title>The human and bovine 14-3-3 eta protein mRNAs are highly conserved in both their translated and untranslated regions.</title>
        <authorList>
            <person name="Swanson K.D."/>
            <person name="Dhar M.S."/>
            <person name="Joshi J.G."/>
        </authorList>
    </citation>
    <scope>NUCLEOTIDE SEQUENCE [MRNA]</scope>
    <source>
        <tissue>Brain</tissue>
    </source>
</reference>
<reference key="2">
    <citation type="journal article" date="1992" name="J. Neurosci. Res.">
        <title>cDNA cloning and chromosome assignment of the gene for human brain 14-3-3 protein eta chain.</title>
        <authorList>
            <person name="Ichimura-Ohshima Y."/>
            <person name="Morii K."/>
            <person name="Ichimura T."/>
            <person name="Araki K."/>
            <person name="Takahashi Y."/>
            <person name="Isobe T."/>
            <person name="Minoshima S."/>
            <person name="Fukuyama R."/>
            <person name="Shimizu N."/>
            <person name="Kuwano R."/>
        </authorList>
    </citation>
    <scope>NUCLEOTIDE SEQUENCE [GENOMIC DNA]</scope>
    <source>
        <tissue>Brain</tissue>
    </source>
</reference>
<reference key="3">
    <citation type="submission" date="1994-03" db="EMBL/GenBank/DDBJ databases">
        <authorList>
            <person name="Leffers H."/>
            <person name="Tommerup N."/>
            <person name="Celis J.E."/>
        </authorList>
    </citation>
    <scope>NUCLEOTIDE SEQUENCE [MRNA]</scope>
</reference>
<reference key="4">
    <citation type="journal article" date="1995" name="Mol. Neurobiol.">
        <title>The effect on methamphetamine on the mRNA level for 14.3.3 eta chain in the human cultured cells.</title>
        <authorList>
            <person name="Muratake T."/>
            <person name="Hayashi S."/>
            <person name="Ichimura Y."/>
            <person name="Morii K."/>
            <person name="Kuwano R."/>
            <person name="Ichikawa T."/>
            <person name="Kumanishi T."/>
            <person name="Isobe T."/>
            <person name="Watanabe M."/>
            <person name="Kondo H."/>
        </authorList>
    </citation>
    <scope>NUCLEOTIDE SEQUENCE [MRNA]</scope>
</reference>
<reference key="5">
    <citation type="journal article" date="1996" name="Genomics">
        <title>Structural organization and chromosomal assignment of the human 14-3-3 eta chain gene (YWHAH).</title>
        <authorList>
            <person name="Muratake T."/>
            <person name="Hayashi S."/>
            <person name="Ichikawa T."/>
            <person name="Kumanishi T."/>
            <person name="Ichimura Y."/>
            <person name="Kuwano R."/>
            <person name="Isobe T."/>
            <person name="Wang Y."/>
            <person name="Minoshima S."/>
            <person name="Shimizu N."/>
            <person name="Takahashi Y."/>
        </authorList>
    </citation>
    <scope>NUCLEOTIDE SEQUENCE [GENOMIC DNA]</scope>
</reference>
<reference key="6">
    <citation type="journal article" date="2004" name="Genome Biol.">
        <title>A genome annotation-driven approach to cloning the human ORFeome.</title>
        <authorList>
            <person name="Collins J.E."/>
            <person name="Wright C.L."/>
            <person name="Edwards C.A."/>
            <person name="Davis M.P."/>
            <person name="Grinham J.A."/>
            <person name="Cole C.G."/>
            <person name="Goward M.E."/>
            <person name="Aguado B."/>
            <person name="Mallya M."/>
            <person name="Mokrab Y."/>
            <person name="Huckle E.J."/>
            <person name="Beare D.M."/>
            <person name="Dunham I."/>
        </authorList>
    </citation>
    <scope>NUCLEOTIDE SEQUENCE [LARGE SCALE MRNA]</scope>
</reference>
<reference key="7">
    <citation type="journal article" date="1999" name="Nature">
        <title>The DNA sequence of human chromosome 22.</title>
        <authorList>
            <person name="Dunham I."/>
            <person name="Hunt A.R."/>
            <person name="Collins J.E."/>
            <person name="Bruskiewich R."/>
            <person name="Beare D.M."/>
            <person name="Clamp M."/>
            <person name="Smink L.J."/>
            <person name="Ainscough R."/>
            <person name="Almeida J.P."/>
            <person name="Babbage A.K."/>
            <person name="Bagguley C."/>
            <person name="Bailey J."/>
            <person name="Barlow K.F."/>
            <person name="Bates K.N."/>
            <person name="Beasley O.P."/>
            <person name="Bird C.P."/>
            <person name="Blakey S.E."/>
            <person name="Bridgeman A.M."/>
            <person name="Buck D."/>
            <person name="Burgess J."/>
            <person name="Burrill W.D."/>
            <person name="Burton J."/>
            <person name="Carder C."/>
            <person name="Carter N.P."/>
            <person name="Chen Y."/>
            <person name="Clark G."/>
            <person name="Clegg S.M."/>
            <person name="Cobley V.E."/>
            <person name="Cole C.G."/>
            <person name="Collier R.E."/>
            <person name="Connor R."/>
            <person name="Conroy D."/>
            <person name="Corby N.R."/>
            <person name="Coville G.J."/>
            <person name="Cox A.V."/>
            <person name="Davis J."/>
            <person name="Dawson E."/>
            <person name="Dhami P.D."/>
            <person name="Dockree C."/>
            <person name="Dodsworth S.J."/>
            <person name="Durbin R.M."/>
            <person name="Ellington A.G."/>
            <person name="Evans K.L."/>
            <person name="Fey J.M."/>
            <person name="Fleming K."/>
            <person name="French L."/>
            <person name="Garner A.A."/>
            <person name="Gilbert J.G.R."/>
            <person name="Goward M.E."/>
            <person name="Grafham D.V."/>
            <person name="Griffiths M.N.D."/>
            <person name="Hall C."/>
            <person name="Hall R.E."/>
            <person name="Hall-Tamlyn G."/>
            <person name="Heathcott R.W."/>
            <person name="Ho S."/>
            <person name="Holmes S."/>
            <person name="Hunt S.E."/>
            <person name="Jones M.C."/>
            <person name="Kershaw J."/>
            <person name="Kimberley A.M."/>
            <person name="King A."/>
            <person name="Laird G.K."/>
            <person name="Langford C.F."/>
            <person name="Leversha M.A."/>
            <person name="Lloyd C."/>
            <person name="Lloyd D.M."/>
            <person name="Martyn I.D."/>
            <person name="Mashreghi-Mohammadi M."/>
            <person name="Matthews L.H."/>
            <person name="Mccann O.T."/>
            <person name="Mcclay J."/>
            <person name="Mclaren S."/>
            <person name="McMurray A.A."/>
            <person name="Milne S.A."/>
            <person name="Mortimore B.J."/>
            <person name="Odell C.N."/>
            <person name="Pavitt R."/>
            <person name="Pearce A.V."/>
            <person name="Pearson D."/>
            <person name="Phillimore B.J.C.T."/>
            <person name="Phillips S.H."/>
            <person name="Plumb R.W."/>
            <person name="Ramsay H."/>
            <person name="Ramsey Y."/>
            <person name="Rogers L."/>
            <person name="Ross M.T."/>
            <person name="Scott C.E."/>
            <person name="Sehra H.K."/>
            <person name="Skuce C.D."/>
            <person name="Smalley S."/>
            <person name="Smith M.L."/>
            <person name="Soderlund C."/>
            <person name="Spragon L."/>
            <person name="Steward C.A."/>
            <person name="Sulston J.E."/>
            <person name="Swann R.M."/>
            <person name="Vaudin M."/>
            <person name="Wall M."/>
            <person name="Wallis J.M."/>
            <person name="Whiteley M.N."/>
            <person name="Willey D.L."/>
            <person name="Williams L."/>
            <person name="Williams S.A."/>
            <person name="Williamson H."/>
            <person name="Wilmer T.E."/>
            <person name="Wilming L."/>
            <person name="Wright C.L."/>
            <person name="Hubbard T."/>
            <person name="Bentley D.R."/>
            <person name="Beck S."/>
            <person name="Rogers J."/>
            <person name="Shimizu N."/>
            <person name="Minoshima S."/>
            <person name="Kawasaki K."/>
            <person name="Sasaki T."/>
            <person name="Asakawa S."/>
            <person name="Kudoh J."/>
            <person name="Shintani A."/>
            <person name="Shibuya K."/>
            <person name="Yoshizaki Y."/>
            <person name="Aoki N."/>
            <person name="Mitsuyama S."/>
            <person name="Roe B.A."/>
            <person name="Chen F."/>
            <person name="Chu L."/>
            <person name="Crabtree J."/>
            <person name="Deschamps S."/>
            <person name="Do A."/>
            <person name="Do T."/>
            <person name="Dorman A."/>
            <person name="Fang F."/>
            <person name="Fu Y."/>
            <person name="Hu P."/>
            <person name="Hua A."/>
            <person name="Kenton S."/>
            <person name="Lai H."/>
            <person name="Lao H.I."/>
            <person name="Lewis J."/>
            <person name="Lewis S."/>
            <person name="Lin S.-P."/>
            <person name="Loh P."/>
            <person name="Malaj E."/>
            <person name="Nguyen T."/>
            <person name="Pan H."/>
            <person name="Phan S."/>
            <person name="Qi S."/>
            <person name="Qian Y."/>
            <person name="Ray L."/>
            <person name="Ren Q."/>
            <person name="Shaull S."/>
            <person name="Sloan D."/>
            <person name="Song L."/>
            <person name="Wang Q."/>
            <person name="Wang Y."/>
            <person name="Wang Z."/>
            <person name="White J."/>
            <person name="Willingham D."/>
            <person name="Wu H."/>
            <person name="Yao Z."/>
            <person name="Zhan M."/>
            <person name="Zhang G."/>
            <person name="Chissoe S."/>
            <person name="Murray J."/>
            <person name="Miller N."/>
            <person name="Minx P."/>
            <person name="Fulton R."/>
            <person name="Johnson D."/>
            <person name="Bemis G."/>
            <person name="Bentley D."/>
            <person name="Bradshaw H."/>
            <person name="Bourne S."/>
            <person name="Cordes M."/>
            <person name="Du Z."/>
            <person name="Fulton L."/>
            <person name="Goela D."/>
            <person name="Graves T."/>
            <person name="Hawkins J."/>
            <person name="Hinds K."/>
            <person name="Kemp K."/>
            <person name="Latreille P."/>
            <person name="Layman D."/>
            <person name="Ozersky P."/>
            <person name="Rohlfing T."/>
            <person name="Scheet P."/>
            <person name="Walker C."/>
            <person name="Wamsley A."/>
            <person name="Wohldmann P."/>
            <person name="Pepin K."/>
            <person name="Nelson J."/>
            <person name="Korf I."/>
            <person name="Bedell J.A."/>
            <person name="Hillier L.W."/>
            <person name="Mardis E."/>
            <person name="Waterston R."/>
            <person name="Wilson R."/>
            <person name="Emanuel B.S."/>
            <person name="Shaikh T."/>
            <person name="Kurahashi H."/>
            <person name="Saitta S."/>
            <person name="Budarf M.L."/>
            <person name="McDermid H.E."/>
            <person name="Johnson A."/>
            <person name="Wong A.C.C."/>
            <person name="Morrow B.E."/>
            <person name="Edelmann L."/>
            <person name="Kim U.J."/>
            <person name="Shizuya H."/>
            <person name="Simon M.I."/>
            <person name="Dumanski J.P."/>
            <person name="Peyrard M."/>
            <person name="Kedra D."/>
            <person name="Seroussi E."/>
            <person name="Fransson I."/>
            <person name="Tapia I."/>
            <person name="Bruder C.E."/>
            <person name="O'Brien K.P."/>
            <person name="Wilkinson P."/>
            <person name="Bodenteich A."/>
            <person name="Hartman K."/>
            <person name="Hu X."/>
            <person name="Khan A.S."/>
            <person name="Lane L."/>
            <person name="Tilahun Y."/>
            <person name="Wright H."/>
        </authorList>
    </citation>
    <scope>NUCLEOTIDE SEQUENCE [LARGE SCALE GENOMIC DNA]</scope>
</reference>
<reference key="8">
    <citation type="journal article" date="2004" name="Genome Res.">
        <title>The status, quality, and expansion of the NIH full-length cDNA project: the Mammalian Gene Collection (MGC).</title>
        <authorList>
            <consortium name="The MGC Project Team"/>
        </authorList>
    </citation>
    <scope>NUCLEOTIDE SEQUENCE [LARGE SCALE MRNA]</scope>
    <source>
        <tissue>Lymph</tissue>
    </source>
</reference>
<reference key="9">
    <citation type="journal article" date="1993" name="J. Mol. Biol.">
        <title>Molecular cloning and expression of the transformation sensitive epithelial marker stratifin. A member of a protein family that has been involved in the protein kinase C signalling pathway.</title>
        <authorList>
            <person name="Leffers H."/>
            <person name="Madsen P."/>
            <person name="Rasmussen H.H."/>
            <person name="Honore B."/>
            <person name="Andersen A.H."/>
            <person name="Walbum E."/>
            <person name="Vandekerckhove J."/>
            <person name="Celis J.E."/>
        </authorList>
    </citation>
    <scope>NUCLEOTIDE SEQUENCE [MRNA] OF 27-225</scope>
    <source>
        <tissue>Keratinocyte</tissue>
    </source>
</reference>
<reference key="10">
    <citation type="journal article" date="2003" name="Nat. Biotechnol.">
        <title>Exploring proteomes and analyzing protein processing by mass spectrometric identification of sorted N-terminal peptides.</title>
        <authorList>
            <person name="Gevaert K."/>
            <person name="Goethals M."/>
            <person name="Martens L."/>
            <person name="Van Damme J."/>
            <person name="Staes A."/>
            <person name="Thomas G.R."/>
            <person name="Vandekerckhove J."/>
        </authorList>
    </citation>
    <scope>PROTEIN SEQUENCE OF 2-10</scope>
    <source>
        <tissue>Platelet</tissue>
    </source>
</reference>
<reference key="11">
    <citation type="submission" date="2005-08" db="UniProtKB">
        <authorList>
            <person name="Bienvenut W.V."/>
        </authorList>
    </citation>
    <scope>PROTEIN SEQUENCE OF 2-10; 29-50; 62-69; 126-132; 144-155; 163-172 AND 218-227</scope>
    <scope>CLEAVAGE OF INITIATOR METHIONINE</scope>
    <scope>ACETYLATION AT GLY-2</scope>
    <scope>IDENTIFICATION BY MASS SPECTROMETRY</scope>
    <source>
        <tissue>Platelet</tissue>
    </source>
</reference>
<reference key="12">
    <citation type="journal article" date="2013" name="MBio">
        <title>ACBD3 interaction with TBC1 domain 22 protein is differentially affected by enteroviral and kobuviral 3A protein binding.</title>
        <authorList>
            <person name="Greninger A.L."/>
            <person name="Knudsen G.M."/>
            <person name="Betegon M."/>
            <person name="Burlingame A.L."/>
            <person name="DeRisi J.L."/>
        </authorList>
    </citation>
    <scope>PROTEIN SEQUENCE OF 1-10; 13-50; 62-78; 111-120 AND 133-162</scope>
    <scope>INTERACTION WITH PI4KB; TBC1D22A AND TBC1D22B</scope>
    <scope>IDENTIFICATION BY MASS SPECTROMETRY</scope>
</reference>
<reference key="13">
    <citation type="journal article" date="2001" name="Mol. Endocrinol.">
        <title>Regulation of glucocorticoid receptor activity by 14-3-3-dependent intracellular relocalization of the corepressor RIP140.</title>
        <authorList>
            <person name="Zilliacus J."/>
            <person name="Holter E."/>
            <person name="Wakui H."/>
            <person name="Tazawa H."/>
            <person name="Treuter E."/>
            <person name="Gustafsson J.-A."/>
        </authorList>
    </citation>
    <scope>INTERACTION WITH AR; ESR1; ESR2; MC2R; NRIP1; NR3C1; PPARBP AND THRA</scope>
</reference>
<reference key="14">
    <citation type="journal article" date="2002" name="J. Biol. Chem.">
        <title>Regulation of kinase activity of 3-phosphoinositide-dependent protein kinase-1 by binding to 14-3-3.</title>
        <authorList>
            <person name="Sato S."/>
            <person name="Fujita N."/>
            <person name="Tsuruo T."/>
        </authorList>
    </citation>
    <scope>FUNCTION</scope>
    <scope>INTERACTION WITH PDPK1</scope>
</reference>
<reference key="15">
    <citation type="journal article" date="2003" name="J. Biol. Chem.">
        <title>Phosphorylation of p27Kip1 at threonine 198 by p90 ribosomal protein S6 kinases promotes its binding to 14-3-3 and cytoplasmic localization.</title>
        <authorList>
            <person name="Fujita N."/>
            <person name="Sato S."/>
            <person name="Tsuruo T."/>
        </authorList>
    </citation>
    <scope>INTERACTION WITH CDKN1B</scope>
</reference>
<reference key="16">
    <citation type="journal article" date="2005" name="Nat. Cell Biol.">
        <title>JNK phosphorylation of 14-3-3 proteins regulates nuclear targeting of c-Abl in the apoptotic response to DNA damage.</title>
        <authorList>
            <person name="Yoshida K."/>
            <person name="Yamaguchi T."/>
            <person name="Natsume T."/>
            <person name="Kufe D."/>
            <person name="Miki Y."/>
        </authorList>
    </citation>
    <scope>INTERACTION WITH ABL1</scope>
    <scope>IDENTIFICATION BY MASS SPECTROMETRY</scope>
</reference>
<reference key="17">
    <citation type="journal article" date="2008" name="EMBO J.">
        <title>Phosphorylation-dependent binding of 14-3-3 terminates signalling by the Gab2 docking protein.</title>
        <authorList>
            <person name="Brummer T."/>
            <person name="Larance M."/>
            <person name="Herrera Abreu M.T."/>
            <person name="Lyons R.J."/>
            <person name="Timpson P."/>
            <person name="Emmerich C.H."/>
            <person name="Fleuren E.D.G."/>
            <person name="Lehrbach G.M."/>
            <person name="Schramek D."/>
            <person name="Guilhaus M."/>
            <person name="James D.E."/>
            <person name="Daly R.J."/>
        </authorList>
    </citation>
    <scope>INTERACTION WITH GAB2</scope>
</reference>
<reference key="18">
    <citation type="journal article" date="2009" name="Biol. Psychiatry">
        <title>SLITRK1 binds 14-3-3 and regulates neurite outgrowth in a phosphorylation-dependent manner.</title>
        <authorList>
            <person name="Kajiwara Y."/>
            <person name="Buxbaum J.D."/>
            <person name="Grice D.E."/>
        </authorList>
    </citation>
    <scope>INTERACTION WITH SLITRK1</scope>
</reference>
<reference key="19">
    <citation type="journal article" date="2009" name="Sci. Signal.">
        <title>Quantitative phosphoproteomic analysis of T cell receptor signaling reveals system-wide modulation of protein-protein interactions.</title>
        <authorList>
            <person name="Mayya V."/>
            <person name="Lundgren D.H."/>
            <person name="Hwang S.-I."/>
            <person name="Rezaul K."/>
            <person name="Wu L."/>
            <person name="Eng J.K."/>
            <person name="Rodionov V."/>
            <person name="Han D.K."/>
        </authorList>
    </citation>
    <scope>PHOSPHORYLATION [LARGE SCALE ANALYSIS] AT SER-25</scope>
    <scope>IDENTIFICATION BY MASS SPECTROMETRY [LARGE SCALE ANALYSIS]</scope>
    <source>
        <tissue>Leukemic T-cell</tissue>
    </source>
</reference>
<reference key="20">
    <citation type="journal article" date="2011" name="BMC Syst. Biol.">
        <title>Initial characterization of the human central proteome.</title>
        <authorList>
            <person name="Burkard T.R."/>
            <person name="Planyavsky M."/>
            <person name="Kaupe I."/>
            <person name="Breitwieser F.P."/>
            <person name="Buerckstuemmer T."/>
            <person name="Bennett K.L."/>
            <person name="Superti-Furga G."/>
            <person name="Colinge J."/>
        </authorList>
    </citation>
    <scope>IDENTIFICATION BY MASS SPECTROMETRY [LARGE SCALE ANALYSIS]</scope>
</reference>
<reference key="21">
    <citation type="journal article" date="2014" name="J. Proteomics">
        <title>An enzyme assisted RP-RPLC approach for in-depth analysis of human liver phosphoproteome.</title>
        <authorList>
            <person name="Bian Y."/>
            <person name="Song C."/>
            <person name="Cheng K."/>
            <person name="Dong M."/>
            <person name="Wang F."/>
            <person name="Huang J."/>
            <person name="Sun D."/>
            <person name="Wang L."/>
            <person name="Ye M."/>
            <person name="Zou H."/>
        </authorList>
    </citation>
    <scope>IDENTIFICATION BY MASS SPECTROMETRY [LARGE SCALE ANALYSIS]</scope>
    <source>
        <tissue>Liver</tissue>
    </source>
</reference>
<reference key="22">
    <citation type="journal article" date="2015" name="Biochem. Biophys. Res. Commun.">
        <title>Suppression of death-associated protein kinase 2 by interaction with 14-3-3 proteins.</title>
        <authorList>
            <person name="Yuasa K."/>
            <person name="Ota R."/>
            <person name="Matsuda S."/>
            <person name="Isshiki K."/>
            <person name="Inoue M."/>
            <person name="Tsuji A."/>
        </authorList>
    </citation>
    <scope>INTERACTION WITH DAPK2</scope>
</reference>
<reference key="23">
    <citation type="journal article" date="2015" name="Proteomics">
        <title>N-terminome analysis of the human mitochondrial proteome.</title>
        <authorList>
            <person name="Vaca Jacome A.S."/>
            <person name="Rabilloud T."/>
            <person name="Schaeffer-Reiss C."/>
            <person name="Rompais M."/>
            <person name="Ayoub D."/>
            <person name="Lane L."/>
            <person name="Bairoch A."/>
            <person name="Van Dorsselaer A."/>
            <person name="Carapito C."/>
        </authorList>
    </citation>
    <scope>IDENTIFICATION BY MASS SPECTROMETRY [LARGE SCALE ANALYSIS]</scope>
</reference>
<reference key="24">
    <citation type="journal article" date="2016" name="Sci. Transl. Med.">
        <title>Familial autoinflammation with neutrophilic dermatosis reveals a regulatory mechanism of pyrin activation.</title>
        <authorList>
            <person name="Masters S.L."/>
            <person name="Lagou V."/>
            <person name="Jeru I."/>
            <person name="Baker P.J."/>
            <person name="Van Eyck L."/>
            <person name="Parry D.A."/>
            <person name="Lawless D."/>
            <person name="De Nardo D."/>
            <person name="Garcia-Perez J.E."/>
            <person name="Dagley L.F."/>
            <person name="Holley C.L."/>
            <person name="Dooley J."/>
            <person name="Moghaddas F."/>
            <person name="Pasciuto E."/>
            <person name="Jeandel P.Y."/>
            <person name="Sciot R."/>
            <person name="Lyras D."/>
            <person name="Webb A.I."/>
            <person name="Nicholson S.E."/>
            <person name="De Somer L."/>
            <person name="van Nieuwenhove E."/>
            <person name="Ruuth-Praz J."/>
            <person name="Copin B."/>
            <person name="Cochet E."/>
            <person name="Medlej-Hashim M."/>
            <person name="Megarbane A."/>
            <person name="Schroder K."/>
            <person name="Savic S."/>
            <person name="Goris A."/>
            <person name="Amselem S."/>
            <person name="Wouters C."/>
            <person name="Liston A."/>
        </authorList>
    </citation>
    <scope>INTERACTION WITH MEFV</scope>
</reference>
<reference key="25">
    <citation type="journal article" date="2006" name="Proc. Natl. Acad. Sci. U.S.A.">
        <title>Structural basis for protein-protein interactions in the 14-3-3 protein family.</title>
        <authorList>
            <person name="Yang X."/>
            <person name="Lee W.H."/>
            <person name="Sobott F."/>
            <person name="Papagrigoriou E."/>
            <person name="Robinson C.V."/>
            <person name="Grossmann J.G."/>
            <person name="Sundstroem M."/>
            <person name="Doyle D.A."/>
            <person name="Elkins J.M."/>
        </authorList>
    </citation>
    <scope>X-RAY CRYSTALLOGRAPHY (2.15 ANGSTROMS)</scope>
    <scope>IDENTIFICATION BY MASS SPECTROMETRY</scope>
    <scope>INTERACTION WITH PHOSPHOSERINE MOTIFS</scope>
    <scope>SUBUNIT</scope>
</reference>
<evidence type="ECO:0000250" key="1"/>
<evidence type="ECO:0000250" key="2">
    <source>
        <dbReference type="UniProtKB" id="P68510"/>
    </source>
</evidence>
<evidence type="ECO:0000269" key="3">
    <source>
    </source>
</evidence>
<evidence type="ECO:0000269" key="4">
    <source>
    </source>
</evidence>
<evidence type="ECO:0000269" key="5">
    <source>
    </source>
</evidence>
<evidence type="ECO:0000269" key="6">
    <source>
    </source>
</evidence>
<evidence type="ECO:0000269" key="7">
    <source>
    </source>
</evidence>
<evidence type="ECO:0000269" key="8">
    <source>
    </source>
</evidence>
<evidence type="ECO:0000269" key="9">
    <source>
    </source>
</evidence>
<evidence type="ECO:0000269" key="10">
    <source>
    </source>
</evidence>
<evidence type="ECO:0000269" key="11">
    <source>
    </source>
</evidence>
<evidence type="ECO:0000269" key="12">
    <source>
    </source>
</evidence>
<evidence type="ECO:0000269" key="13">
    <source>
    </source>
</evidence>
<evidence type="ECO:0000269" key="14">
    <source ref="11"/>
</evidence>
<evidence type="ECO:0000305" key="15"/>
<evidence type="ECO:0007744" key="16">
    <source>
    </source>
</evidence>
<evidence type="ECO:0007829" key="17">
    <source>
        <dbReference type="PDB" id="2C63"/>
    </source>
</evidence>
<keyword id="KW-0002">3D-structure</keyword>
<keyword id="KW-0007">Acetylation</keyword>
<keyword id="KW-0903">Direct protein sequencing</keyword>
<keyword id="KW-0597">Phosphoprotein</keyword>
<keyword id="KW-1267">Proteomics identification</keyword>
<keyword id="KW-1185">Reference proteome</keyword>
<name>1433F_HUMAN</name>
<dbReference type="EMBL" id="L20422">
    <property type="protein sequence ID" value="AAA35483.1"/>
    <property type="molecule type" value="mRNA"/>
</dbReference>
<dbReference type="EMBL" id="X80536">
    <property type="protein sequence ID" value="CAA56676.1"/>
    <property type="molecule type" value="Genomic_DNA"/>
</dbReference>
<dbReference type="EMBL" id="X78138">
    <property type="protein sequence ID" value="CAA55017.1"/>
    <property type="molecule type" value="mRNA"/>
</dbReference>
<dbReference type="EMBL" id="X57345">
    <property type="protein sequence ID" value="CAA40620.1"/>
    <property type="molecule type" value="mRNA"/>
</dbReference>
<dbReference type="EMBL" id="D78577">
    <property type="protein sequence ID" value="BAA11418.1"/>
    <property type="molecule type" value="Genomic_DNA"/>
</dbReference>
<dbReference type="EMBL" id="S80794">
    <property type="protein sequence ID" value="AAB36036.1"/>
    <property type="molecule type" value="mRNA"/>
</dbReference>
<dbReference type="EMBL" id="CR456612">
    <property type="protein sequence ID" value="CAG30498.1"/>
    <property type="molecule type" value="mRNA"/>
</dbReference>
<dbReference type="EMBL" id="Z82248">
    <property type="status" value="NOT_ANNOTATED_CDS"/>
    <property type="molecule type" value="Genomic_DNA"/>
</dbReference>
<dbReference type="EMBL" id="BC003047">
    <property type="protein sequence ID" value="AAH03047.1"/>
    <property type="molecule type" value="mRNA"/>
</dbReference>
<dbReference type="CCDS" id="CCDS13901.1"/>
<dbReference type="PIR" id="S34756">
    <property type="entry name" value="S34756"/>
</dbReference>
<dbReference type="PIR" id="S38509">
    <property type="entry name" value="S38509"/>
</dbReference>
<dbReference type="PIR" id="S38532">
    <property type="entry name" value="S38532"/>
</dbReference>
<dbReference type="RefSeq" id="NP_003396.1">
    <property type="nucleotide sequence ID" value="NM_003405.4"/>
</dbReference>
<dbReference type="PDB" id="2C63">
    <property type="method" value="X-ray"/>
    <property type="resolution" value="2.15 A"/>
    <property type="chains" value="A/B/C/D=2-246"/>
</dbReference>
<dbReference type="PDB" id="2C74">
    <property type="method" value="X-ray"/>
    <property type="resolution" value="2.70 A"/>
    <property type="chains" value="A/B=2-246"/>
</dbReference>
<dbReference type="PDB" id="7NMZ">
    <property type="method" value="X-ray"/>
    <property type="resolution" value="2.30 A"/>
    <property type="chains" value="AA/BA=1-234"/>
</dbReference>
<dbReference type="PDBsum" id="2C63"/>
<dbReference type="PDBsum" id="2C74"/>
<dbReference type="PDBsum" id="7NMZ"/>
<dbReference type="SMR" id="Q04917"/>
<dbReference type="BioGRID" id="113365">
    <property type="interactions" value="1126"/>
</dbReference>
<dbReference type="CORUM" id="Q04917"/>
<dbReference type="DIP" id="DIP-27566N"/>
<dbReference type="ELM" id="Q04917"/>
<dbReference type="FunCoup" id="Q04917">
    <property type="interactions" value="1134"/>
</dbReference>
<dbReference type="IntAct" id="Q04917">
    <property type="interactions" value="986"/>
</dbReference>
<dbReference type="MINT" id="Q04917"/>
<dbReference type="STRING" id="9606.ENSP00000248975"/>
<dbReference type="BindingDB" id="Q04917"/>
<dbReference type="ChEMBL" id="CHEMBL3708585"/>
<dbReference type="DrugBank" id="DB12695">
    <property type="generic name" value="Phenethyl Isothiocyanate"/>
</dbReference>
<dbReference type="GlyGen" id="Q04917">
    <property type="glycosylation" value="1 site, 1 O-linked glycan (1 site)"/>
</dbReference>
<dbReference type="iPTMnet" id="Q04917"/>
<dbReference type="MetOSite" id="Q04917"/>
<dbReference type="PhosphoSitePlus" id="Q04917"/>
<dbReference type="SwissPalm" id="Q04917"/>
<dbReference type="BioMuta" id="YWHAH"/>
<dbReference type="DMDM" id="1345593"/>
<dbReference type="jPOST" id="Q04917"/>
<dbReference type="MassIVE" id="Q04917"/>
<dbReference type="PaxDb" id="9606-ENSP00000248975"/>
<dbReference type="PeptideAtlas" id="Q04917"/>
<dbReference type="ProteomicsDB" id="58300"/>
<dbReference type="Pumba" id="Q04917"/>
<dbReference type="TopDownProteomics" id="Q04917"/>
<dbReference type="Antibodypedia" id="11204">
    <property type="antibodies" value="314 antibodies from 37 providers"/>
</dbReference>
<dbReference type="DNASU" id="7533"/>
<dbReference type="Ensembl" id="ENST00000248975.6">
    <property type="protein sequence ID" value="ENSP00000248975.5"/>
    <property type="gene ID" value="ENSG00000128245.15"/>
</dbReference>
<dbReference type="GeneID" id="7533"/>
<dbReference type="KEGG" id="hsa:7533"/>
<dbReference type="MANE-Select" id="ENST00000248975.6">
    <property type="protein sequence ID" value="ENSP00000248975.5"/>
    <property type="RefSeq nucleotide sequence ID" value="NM_003405.4"/>
    <property type="RefSeq protein sequence ID" value="NP_003396.1"/>
</dbReference>
<dbReference type="UCSC" id="uc003alz.4">
    <property type="organism name" value="human"/>
</dbReference>
<dbReference type="AGR" id="HGNC:12853"/>
<dbReference type="CTD" id="7533"/>
<dbReference type="DisGeNET" id="7533"/>
<dbReference type="GeneCards" id="YWHAH"/>
<dbReference type="HGNC" id="HGNC:12853">
    <property type="gene designation" value="YWHAH"/>
</dbReference>
<dbReference type="HPA" id="ENSG00000128245">
    <property type="expression patterns" value="Tissue enriched (brain)"/>
</dbReference>
<dbReference type="MIM" id="113508">
    <property type="type" value="gene"/>
</dbReference>
<dbReference type="neXtProt" id="NX_Q04917"/>
<dbReference type="OpenTargets" id="ENSG00000128245"/>
<dbReference type="PharmGKB" id="PA37442"/>
<dbReference type="VEuPathDB" id="HostDB:ENSG00000128245"/>
<dbReference type="eggNOG" id="KOG0841">
    <property type="taxonomic scope" value="Eukaryota"/>
</dbReference>
<dbReference type="GeneTree" id="ENSGT01090000260040"/>
<dbReference type="HOGENOM" id="CLU_058290_0_0_1"/>
<dbReference type="InParanoid" id="Q04917"/>
<dbReference type="OMA" id="KNCDESQ"/>
<dbReference type="OrthoDB" id="10260625at2759"/>
<dbReference type="PAN-GO" id="Q04917">
    <property type="GO annotations" value="3 GO annotations based on evolutionary models"/>
</dbReference>
<dbReference type="PhylomeDB" id="Q04917"/>
<dbReference type="TreeFam" id="TF102003"/>
<dbReference type="PathwayCommons" id="Q04917"/>
<dbReference type="Reactome" id="R-HSA-111447">
    <property type="pathway name" value="Activation of BAD and translocation to mitochondria"/>
</dbReference>
<dbReference type="Reactome" id="R-HSA-1445148">
    <property type="pathway name" value="Translocation of SLC2A4 (GLUT4) to the plasma membrane"/>
</dbReference>
<dbReference type="Reactome" id="R-HSA-5625740">
    <property type="pathway name" value="RHO GTPases activate PKNs"/>
</dbReference>
<dbReference type="Reactome" id="R-HSA-5628897">
    <property type="pathway name" value="TP53 Regulates Metabolic Genes"/>
</dbReference>
<dbReference type="Reactome" id="R-HSA-75035">
    <property type="pathway name" value="Chk1/Chk2(Cds1) mediated inactivation of Cyclin B:Cdk1 complex"/>
</dbReference>
<dbReference type="Reactome" id="R-HSA-9735871">
    <property type="pathway name" value="SARS-CoV-1 targets host intracellular signalling and regulatory pathways"/>
</dbReference>
<dbReference type="Reactome" id="R-HSA-9755779">
    <property type="pathway name" value="SARS-CoV-2 targets host intracellular signalling and regulatory pathways"/>
</dbReference>
<dbReference type="Reactome" id="R-HSA-9856649">
    <property type="pathway name" value="Transcriptional and post-translational regulation of MITF-M expression and activity"/>
</dbReference>
<dbReference type="SignaLink" id="Q04917"/>
<dbReference type="SIGNOR" id="Q04917"/>
<dbReference type="BioGRID-ORCS" id="7533">
    <property type="hits" value="15 hits in 1154 CRISPR screens"/>
</dbReference>
<dbReference type="CD-CODE" id="DEE660B4">
    <property type="entry name" value="Stress granule"/>
</dbReference>
<dbReference type="CD-CODE" id="FB4E32DD">
    <property type="entry name" value="Presynaptic clusters and postsynaptic densities"/>
</dbReference>
<dbReference type="ChiTaRS" id="YWHAH">
    <property type="organism name" value="human"/>
</dbReference>
<dbReference type="EvolutionaryTrace" id="Q04917"/>
<dbReference type="GeneWiki" id="YWHAH"/>
<dbReference type="GenomeRNAi" id="7533"/>
<dbReference type="Pharos" id="Q04917">
    <property type="development level" value="Tbio"/>
</dbReference>
<dbReference type="PRO" id="PR:Q04917"/>
<dbReference type="Proteomes" id="UP000005640">
    <property type="component" value="Chromosome 22"/>
</dbReference>
<dbReference type="RNAct" id="Q04917">
    <property type="molecule type" value="protein"/>
</dbReference>
<dbReference type="Bgee" id="ENSG00000128245">
    <property type="expression patterns" value="Expressed in frontal pole and 196 other cell types or tissues"/>
</dbReference>
<dbReference type="ExpressionAtlas" id="Q04917">
    <property type="expression patterns" value="baseline and differential"/>
</dbReference>
<dbReference type="GO" id="GO:0150048">
    <property type="term" value="C:cerebellar granule cell to Purkinje cell synapse"/>
    <property type="evidence" value="ECO:0007669"/>
    <property type="project" value="Ensembl"/>
</dbReference>
<dbReference type="GO" id="GO:0005737">
    <property type="term" value="C:cytoplasm"/>
    <property type="evidence" value="ECO:0000250"/>
    <property type="project" value="UniProtKB"/>
</dbReference>
<dbReference type="GO" id="GO:0005829">
    <property type="term" value="C:cytosol"/>
    <property type="evidence" value="ECO:0000304"/>
    <property type="project" value="Reactome"/>
</dbReference>
<dbReference type="GO" id="GO:0070062">
    <property type="term" value="C:extracellular exosome"/>
    <property type="evidence" value="ECO:0007005"/>
    <property type="project" value="UniProtKB"/>
</dbReference>
<dbReference type="GO" id="GO:0014704">
    <property type="term" value="C:intercalated disc"/>
    <property type="evidence" value="ECO:0000305"/>
    <property type="project" value="BHF-UCL"/>
</dbReference>
<dbReference type="GO" id="GO:0005739">
    <property type="term" value="C:mitochondrion"/>
    <property type="evidence" value="ECO:0000314"/>
    <property type="project" value="FlyBase"/>
</dbReference>
<dbReference type="GO" id="GO:0005886">
    <property type="term" value="C:plasma membrane"/>
    <property type="evidence" value="ECO:0000314"/>
    <property type="project" value="BHF-UCL"/>
</dbReference>
<dbReference type="GO" id="GO:0098793">
    <property type="term" value="C:presynapse"/>
    <property type="evidence" value="ECO:0007669"/>
    <property type="project" value="Ensembl"/>
</dbReference>
<dbReference type="GO" id="GO:0003779">
    <property type="term" value="F:actin binding"/>
    <property type="evidence" value="ECO:0007669"/>
    <property type="project" value="Ensembl"/>
</dbReference>
<dbReference type="GO" id="GO:0019899">
    <property type="term" value="F:enzyme binding"/>
    <property type="evidence" value="ECO:0000353"/>
    <property type="project" value="BHF-UCL"/>
</dbReference>
<dbReference type="GO" id="GO:0042802">
    <property type="term" value="F:identical protein binding"/>
    <property type="evidence" value="ECO:0000353"/>
    <property type="project" value="IntAct"/>
</dbReference>
<dbReference type="GO" id="GO:0005159">
    <property type="term" value="F:insulin-like growth factor receptor binding"/>
    <property type="evidence" value="ECO:0000250"/>
    <property type="project" value="UniProtKB"/>
</dbReference>
<dbReference type="GO" id="GO:0035259">
    <property type="term" value="F:nuclear glucocorticoid receptor binding"/>
    <property type="evidence" value="ECO:0000353"/>
    <property type="project" value="UniProtKB"/>
</dbReference>
<dbReference type="GO" id="GO:0019904">
    <property type="term" value="F:protein domain specific binding"/>
    <property type="evidence" value="ECO:0000250"/>
    <property type="project" value="UniProtKB"/>
</dbReference>
<dbReference type="GO" id="GO:0046982">
    <property type="term" value="F:protein heterodimerization activity"/>
    <property type="evidence" value="ECO:0000353"/>
    <property type="project" value="BHF-UCL"/>
</dbReference>
<dbReference type="GO" id="GO:0017080">
    <property type="term" value="F:sodium channel regulator activity"/>
    <property type="evidence" value="ECO:0000314"/>
    <property type="project" value="BHF-UCL"/>
</dbReference>
<dbReference type="GO" id="GO:0044325">
    <property type="term" value="F:transmembrane transporter binding"/>
    <property type="evidence" value="ECO:0000353"/>
    <property type="project" value="BHF-UCL"/>
</dbReference>
<dbReference type="GO" id="GO:0006713">
    <property type="term" value="P:glucocorticoid catabolic process"/>
    <property type="evidence" value="ECO:0000314"/>
    <property type="project" value="UniProtKB"/>
</dbReference>
<dbReference type="GO" id="GO:0006886">
    <property type="term" value="P:intracellular protein transport"/>
    <property type="evidence" value="ECO:0000250"/>
    <property type="project" value="UniProtKB"/>
</dbReference>
<dbReference type="GO" id="GO:0086010">
    <property type="term" value="P:membrane depolarization during action potential"/>
    <property type="evidence" value="ECO:0000314"/>
    <property type="project" value="BHF-UCL"/>
</dbReference>
<dbReference type="GO" id="GO:0050774">
    <property type="term" value="P:negative regulation of dendrite morphogenesis"/>
    <property type="evidence" value="ECO:0000250"/>
    <property type="project" value="UniProtKB"/>
</dbReference>
<dbReference type="GO" id="GO:0042921">
    <property type="term" value="P:nuclear receptor-mediated glucocorticoid signaling pathway"/>
    <property type="evidence" value="ECO:0000314"/>
    <property type="project" value="UniProtKB"/>
</dbReference>
<dbReference type="GO" id="GO:0045893">
    <property type="term" value="P:positive regulation of DNA-templated transcription"/>
    <property type="evidence" value="ECO:0000314"/>
    <property type="project" value="UniProtKB"/>
</dbReference>
<dbReference type="GO" id="GO:0099171">
    <property type="term" value="P:presynaptic modulation of chemical synaptic transmission"/>
    <property type="evidence" value="ECO:0007669"/>
    <property type="project" value="Ensembl"/>
</dbReference>
<dbReference type="GO" id="GO:0008104">
    <property type="term" value="P:protein localization"/>
    <property type="evidence" value="ECO:0000318"/>
    <property type="project" value="GO_Central"/>
</dbReference>
<dbReference type="GO" id="GO:0045664">
    <property type="term" value="P:regulation of neuron differentiation"/>
    <property type="evidence" value="ECO:0000250"/>
    <property type="project" value="UniProtKB"/>
</dbReference>
<dbReference type="GO" id="GO:0002028">
    <property type="term" value="P:regulation of sodium ion transport"/>
    <property type="evidence" value="ECO:0000314"/>
    <property type="project" value="BHF-UCL"/>
</dbReference>
<dbReference type="GO" id="GO:0048167">
    <property type="term" value="P:regulation of synaptic plasticity"/>
    <property type="evidence" value="ECO:0000250"/>
    <property type="project" value="UniProtKB"/>
</dbReference>
<dbReference type="GO" id="GO:0007165">
    <property type="term" value="P:signal transduction"/>
    <property type="evidence" value="ECO:0000318"/>
    <property type="project" value="GO_Central"/>
</dbReference>
<dbReference type="GO" id="GO:0021762">
    <property type="term" value="P:substantia nigra development"/>
    <property type="evidence" value="ECO:0007007"/>
    <property type="project" value="UniProtKB"/>
</dbReference>
<dbReference type="CDD" id="cd10025">
    <property type="entry name" value="14-3-3_eta"/>
    <property type="match status" value="1"/>
</dbReference>
<dbReference type="FunFam" id="1.20.190.20:FF:000001">
    <property type="entry name" value="14-3-3 gamma 1"/>
    <property type="match status" value="1"/>
</dbReference>
<dbReference type="Gene3D" id="1.20.190.20">
    <property type="entry name" value="14-3-3 domain"/>
    <property type="match status" value="1"/>
</dbReference>
<dbReference type="InterPro" id="IPR000308">
    <property type="entry name" value="14-3-3"/>
</dbReference>
<dbReference type="InterPro" id="IPR023409">
    <property type="entry name" value="14-3-3_CS"/>
</dbReference>
<dbReference type="InterPro" id="IPR036815">
    <property type="entry name" value="14-3-3_dom_sf"/>
</dbReference>
<dbReference type="InterPro" id="IPR023410">
    <property type="entry name" value="14-3-3_domain"/>
</dbReference>
<dbReference type="PANTHER" id="PTHR18860">
    <property type="entry name" value="14-3-3 PROTEIN"/>
    <property type="match status" value="1"/>
</dbReference>
<dbReference type="Pfam" id="PF00244">
    <property type="entry name" value="14-3-3"/>
    <property type="match status" value="1"/>
</dbReference>
<dbReference type="PIRSF" id="PIRSF000868">
    <property type="entry name" value="14-3-3"/>
    <property type="match status" value="1"/>
</dbReference>
<dbReference type="PRINTS" id="PR00305">
    <property type="entry name" value="1433ZETA"/>
</dbReference>
<dbReference type="SMART" id="SM00101">
    <property type="entry name" value="14_3_3"/>
    <property type="match status" value="1"/>
</dbReference>
<dbReference type="SUPFAM" id="SSF48445">
    <property type="entry name" value="14-3-3 protein"/>
    <property type="match status" value="1"/>
</dbReference>
<dbReference type="PROSITE" id="PS00796">
    <property type="entry name" value="1433_1"/>
    <property type="match status" value="1"/>
</dbReference>
<dbReference type="PROSITE" id="PS00797">
    <property type="entry name" value="1433_2"/>
    <property type="match status" value="1"/>
</dbReference>
<organism>
    <name type="scientific">Homo sapiens</name>
    <name type="common">Human</name>
    <dbReference type="NCBI Taxonomy" id="9606"/>
    <lineage>
        <taxon>Eukaryota</taxon>
        <taxon>Metazoa</taxon>
        <taxon>Chordata</taxon>
        <taxon>Craniata</taxon>
        <taxon>Vertebrata</taxon>
        <taxon>Euteleostomi</taxon>
        <taxon>Mammalia</taxon>
        <taxon>Eutheria</taxon>
        <taxon>Euarchontoglires</taxon>
        <taxon>Primates</taxon>
        <taxon>Haplorrhini</taxon>
        <taxon>Catarrhini</taxon>
        <taxon>Hominidae</taxon>
        <taxon>Homo</taxon>
    </lineage>
</organism>
<gene>
    <name type="primary">YWHAH</name>
    <name type="synonym">YWHA1</name>
</gene>
<proteinExistence type="evidence at protein level"/>
<comment type="function">
    <text evidence="4">Adapter protein implicated in the regulation of a large spectrum of both general and specialized signaling pathways. Binds to a large number of partners, usually by recognition of a phosphoserine or phosphothreonine motif. Binding generally results in the modulation of the activity of the binding partner. Negatively regulates the kinase activity of PDPK1.</text>
</comment>
<comment type="subunit">
    <text evidence="1 3 4 6 7 8 9 10 11 12 13">Homodimer (By similarity). Interacts with many nuclear hormone receptors and cofactors including AR, ESR1, ESR2, MC2R, NR3C1, NRIP1, PPARBP and THRA. Interacts with ABL1 (phosphorylated form); the interaction retains it in the cytoplasm. Interacts with ARHGEF28 and CDK16 (By similarity). Weakly interacts with CDKN1B. Interacts with GAB2. Interacts with KCNK18 in a phosphorylation-dependent manner. Interacts with SAMSN1 (By similarity). Interacts with the 'Ser-241' phosphorylated form of PDPK1. Interacts with the 'Thr-369' phosphorylated form of DAPK2 (PubMed:26047703). Interacts with PI4KB, TBC1D22A and TBC1D22B (PubMed:23572552). Interacts with SLITRK1 (PubMed:19640509). Interacts with MEFV (PubMed:27030597).</text>
</comment>
<comment type="interaction">
    <interactant intactId="EBI-306940">
        <id>Q04917</id>
    </interactant>
    <interactant intactId="EBI-720593">
        <id>Q96B36</id>
        <label>AKT1S1</label>
    </interactant>
    <organismsDiffer>false</organismsDiffer>
    <experiments>7</experiments>
</comment>
<comment type="interaction">
    <interactant intactId="EBI-306940">
        <id>Q04917</id>
    </interactant>
    <interactant intactId="EBI-930964">
        <id>P54253</id>
        <label>ATXN1</label>
    </interactant>
    <organismsDiffer>false</organismsDiffer>
    <experiments>10</experiments>
</comment>
<comment type="interaction">
    <interactant intactId="EBI-306940">
        <id>Q04917</id>
    </interactant>
    <interactant intactId="EBI-700771">
        <id>Q92934</id>
        <label>BAD</label>
    </interactant>
    <organismsDiffer>false</organismsDiffer>
    <experiments>8</experiments>
</comment>
<comment type="interaction">
    <interactant intactId="EBI-306940">
        <id>Q04917</id>
    </interactant>
    <interactant intactId="EBI-6424030">
        <id>Q8N5S9</id>
        <label>CAMKK1</label>
    </interactant>
    <organismsDiffer>false</organismsDiffer>
    <experiments>7</experiments>
</comment>
<comment type="interaction">
    <interactant intactId="EBI-306940">
        <id>Q04917</id>
    </interactant>
    <interactant intactId="EBI-518228">
        <id>P22681</id>
        <label>CBL</label>
    </interactant>
    <organismsDiffer>false</organismsDiffer>
    <experiments>5</experiments>
</comment>
<comment type="interaction">
    <interactant intactId="EBI-306940">
        <id>Q04917</id>
    </interactant>
    <interactant intactId="EBI-11977221">
        <id>Q86Z20</id>
        <label>CCDC125</label>
    </interactant>
    <organismsDiffer>false</organismsDiffer>
    <experiments>3</experiments>
</comment>
<comment type="interaction">
    <interactant intactId="EBI-306940">
        <id>Q04917</id>
    </interactant>
    <interactant intactId="EBI-1049189">
        <id>Q8ND76</id>
        <label>CCNY</label>
    </interactant>
    <organismsDiffer>false</organismsDiffer>
    <experiments>2</experiments>
</comment>
<comment type="interaction">
    <interactant intactId="EBI-306940">
        <id>Q04917</id>
    </interactant>
    <interactant intactId="EBI-1051746">
        <id>P30305</id>
        <label>CDC25B</label>
    </interactant>
    <organismsDiffer>false</organismsDiffer>
    <experiments>7</experiments>
</comment>
<comment type="interaction">
    <interactant intactId="EBI-306940">
        <id>Q04917</id>
    </interactant>
    <interactant intactId="EBI-1043945">
        <id>O94921</id>
        <label>CDK14</label>
    </interactant>
    <organismsDiffer>false</organismsDiffer>
    <experiments>6</experiments>
</comment>
<comment type="interaction">
    <interactant intactId="EBI-306940">
        <id>Q04917</id>
    </interactant>
    <interactant intactId="EBI-749343">
        <id>P49674</id>
        <label>CSNK1E</label>
    </interactant>
    <organismsDiffer>false</organismsDiffer>
    <experiments>3</experiments>
</comment>
<comment type="interaction">
    <interactant intactId="EBI-306940">
        <id>Q04917</id>
    </interactant>
    <interactant intactId="EBI-3959469">
        <id>Q6ZV73</id>
        <label>FGD6</label>
    </interactant>
    <organismsDiffer>false</organismsDiffer>
    <experiments>5</experiments>
</comment>
<comment type="interaction">
    <interactant intactId="EBI-306940">
        <id>Q04917</id>
    </interactant>
    <interactant intactId="EBI-944395">
        <id>O60565</id>
        <label>GREM1</label>
    </interactant>
    <organismsDiffer>false</organismsDiffer>
    <experiments>5</experiments>
</comment>
<comment type="interaction">
    <interactant intactId="EBI-306940">
        <id>Q04917</id>
    </interactant>
    <interactant intactId="EBI-308629">
        <id>P56524</id>
        <label>HDAC4</label>
    </interactant>
    <organismsDiffer>false</organismsDiffer>
    <experiments>10</experiments>
</comment>
<comment type="interaction">
    <interactant intactId="EBI-306940">
        <id>Q04917</id>
    </interactant>
    <interactant intactId="EBI-11900149">
        <id>Q9NRR6</id>
        <label>INPP5E</label>
    </interactant>
    <organismsDiffer>false</organismsDiffer>
    <experiments>4</experiments>
</comment>
<comment type="interaction">
    <interactant intactId="EBI-306940">
        <id>Q04917</id>
    </interactant>
    <interactant intactId="EBI-6173812">
        <id>Q14678-2</id>
        <label>KANK1</label>
    </interactant>
    <organismsDiffer>false</organismsDiffer>
    <experiments>3</experiments>
</comment>
<comment type="interaction">
    <interactant intactId="EBI-306940">
        <id>Q04917</id>
    </interactant>
    <interactant intactId="EBI-5323863">
        <id>Q5S007</id>
        <label>LRRK2</label>
    </interactant>
    <organismsDiffer>false</organismsDiffer>
    <experiments>6</experiments>
</comment>
<comment type="interaction">
    <interactant intactId="EBI-306940">
        <id>Q04917</id>
    </interactant>
    <interactant intactId="EBI-307281">
        <id>Q99759</id>
        <label>MAP3K3</label>
    </interactant>
    <organismsDiffer>false</organismsDiffer>
    <experiments>6</experiments>
</comment>
<comment type="interaction">
    <interactant intactId="EBI-306940">
        <id>Q04917</id>
    </interactant>
    <interactant intactId="EBI-476263">
        <id>Q99683</id>
        <label>MAP3K5</label>
    </interactant>
    <organismsDiffer>false</organismsDiffer>
    <experiments>4</experiments>
</comment>
<comment type="interaction">
    <interactant intactId="EBI-306940">
        <id>Q04917</id>
    </interactant>
    <interactant intactId="EBI-516560">
        <id>Q7KZI7</id>
        <label>MARK2</label>
    </interactant>
    <organismsDiffer>false</organismsDiffer>
    <experiments>16</experiments>
</comment>
<comment type="interaction">
    <interactant intactId="EBI-306940">
        <id>Q04917</id>
    </interactant>
    <interactant intactId="EBI-707595">
        <id>P27448</id>
        <label>MARK3</label>
    </interactant>
    <organismsDiffer>false</organismsDiffer>
    <experiments>13</experiments>
</comment>
<comment type="interaction">
    <interactant intactId="EBI-306940">
        <id>Q04917</id>
    </interactant>
    <interactant intactId="EBI-302319">
        <id>Q96L34</id>
        <label>MARK4</label>
    </interactant>
    <organismsDiffer>false</organismsDiffer>
    <experiments>7</experiments>
</comment>
<comment type="interaction">
    <interactant intactId="EBI-306940">
        <id>Q04917</id>
    </interactant>
    <interactant intactId="EBI-717962">
        <id>Q96PU5</id>
        <label>NEDD4L</label>
    </interactant>
    <organismsDiffer>false</organismsDiffer>
    <experiments>5</experiments>
</comment>
<comment type="interaction">
    <interactant intactId="EBI-306940">
        <id>Q04917</id>
    </interactant>
    <interactant intactId="EBI-373615">
        <id>Q96PY6</id>
        <label>NEK1</label>
    </interactant>
    <organismsDiffer>false</organismsDiffer>
    <experiments>6</experiments>
</comment>
<comment type="interaction">
    <interactant intactId="EBI-306940">
        <id>Q04917</id>
    </interactant>
    <interactant intactId="EBI-2859639">
        <id>Q5HYW2</id>
        <label>NHSL2</label>
    </interactant>
    <organismsDiffer>false</organismsDiffer>
    <experiments>3</experiments>
</comment>
<comment type="interaction">
    <interactant intactId="EBI-306940">
        <id>Q04917</id>
    </interactant>
    <interactant intactId="EBI-81968">
        <id>Q8TEW0</id>
        <label>PARD3</label>
    </interactant>
    <organismsDiffer>false</organismsDiffer>
    <experiments>13</experiments>
</comment>
<comment type="interaction">
    <interactant intactId="EBI-306940">
        <id>Q04917</id>
    </interactant>
    <interactant intactId="EBI-81876">
        <id>Q9NPB6</id>
        <label>PARD6A</label>
    </interactant>
    <organismsDiffer>false</organismsDiffer>
    <experiments>2</experiments>
</comment>
<comment type="interaction">
    <interactant intactId="EBI-306940">
        <id>Q04917</id>
    </interactant>
    <interactant intactId="EBI-295391">
        <id>Q9BYG5</id>
        <label>PARD6B</label>
    </interactant>
    <organismsDiffer>false</organismsDiffer>
    <experiments>3</experiments>
</comment>
<comment type="interaction">
    <interactant intactId="EBI-306940">
        <id>Q04917</id>
    </interactant>
    <interactant intactId="EBI-295417">
        <id>Q9BYG4</id>
        <label>PARD6G</label>
    </interactant>
    <organismsDiffer>false</organismsDiffer>
    <experiments>2</experiments>
</comment>
<comment type="interaction">
    <interactant intactId="EBI-306940">
        <id>Q04917</id>
    </interactant>
    <interactant intactId="EBI-746202">
        <id>O00444</id>
        <label>PLK4</label>
    </interactant>
    <organismsDiffer>false</organismsDiffer>
    <experiments>2</experiments>
</comment>
<comment type="interaction">
    <interactant intactId="EBI-306940">
        <id>Q04917</id>
    </interactant>
    <interactant intactId="EBI-286199">
        <id>P41743</id>
        <label>PRKCI</label>
    </interactant>
    <organismsDiffer>false</organismsDiffer>
    <experiments>4</experiments>
</comment>
<comment type="interaction">
    <interactant intactId="EBI-306940">
        <id>Q04917</id>
    </interactant>
    <interactant intactId="EBI-1384325">
        <id>Q9BZL6</id>
        <label>PRKD2</label>
    </interactant>
    <organismsDiffer>false</organismsDiffer>
    <experiments>3</experiments>
</comment>
<comment type="interaction">
    <interactant intactId="EBI-306940">
        <id>Q04917</id>
    </interactant>
    <interactant intactId="EBI-21251460">
        <id>O60260-5</id>
        <label>PRKN</label>
    </interactant>
    <organismsDiffer>false</organismsDiffer>
    <experiments>6</experiments>
</comment>
<comment type="interaction">
    <interactant intactId="EBI-306940">
        <id>Q04917</id>
    </interactant>
    <interactant intactId="EBI-1387467">
        <id>P85299</id>
        <label>PRR5</label>
    </interactant>
    <organismsDiffer>false</organismsDiffer>
    <experiments>3</experiments>
</comment>
<comment type="interaction">
    <interactant intactId="EBI-306940">
        <id>Q04917</id>
    </interactant>
    <interactant intactId="EBI-365996">
        <id>P04049</id>
        <label>RAF1</label>
    </interactant>
    <organismsDiffer>false</organismsDiffer>
    <experiments>27</experiments>
</comment>
<comment type="interaction">
    <interactant intactId="EBI-306940">
        <id>Q04917</id>
    </interactant>
    <interactant intactId="EBI-985879">
        <id>P37840</id>
        <label>SNCA</label>
    </interactant>
    <organismsDiffer>false</organismsDiffer>
    <experiments>4</experiments>
</comment>
<comment type="interaction">
    <interactant intactId="EBI-306940">
        <id>Q04917</id>
    </interactant>
    <interactant intactId="EBI-9684465">
        <id>P37840-1</id>
        <label>SNCA</label>
    </interactant>
    <organismsDiffer>false</organismsDiffer>
    <experiments>9</experiments>
</comment>
<comment type="interaction">
    <interactant intactId="EBI-306940">
        <id>Q04917</id>
    </interactant>
    <interactant intactId="EBI-2822128">
        <id>Q96JI7</id>
        <label>SPG11</label>
    </interactant>
    <organismsDiffer>false</organismsDiffer>
    <experiments>3</experiments>
</comment>
<comment type="interaction">
    <interactant intactId="EBI-306940">
        <id>Q04917</id>
    </interactant>
    <interactant intactId="EBI-2212028">
        <id>Q9Y2D8</id>
        <label>SSX2IP</label>
    </interactant>
    <organismsDiffer>false</organismsDiffer>
    <experiments>4</experiments>
</comment>
<comment type="interaction">
    <interactant intactId="EBI-306940">
        <id>Q04917</id>
    </interactant>
    <interactant intactId="EBI-356498">
        <id>P62258</id>
        <label>YWHAE</label>
    </interactant>
    <organismsDiffer>false</organismsDiffer>
    <experiments>13</experiments>
</comment>
<comment type="interaction">
    <interactant intactId="EBI-306940">
        <id>Q04917</id>
    </interactant>
    <interactant intactId="EBI-306940">
        <id>Q04917</id>
        <label>YWHAH</label>
    </interactant>
    <organismsDiffer>false</organismsDiffer>
    <experiments>5</experiments>
</comment>
<comment type="interaction">
    <interactant intactId="EBI-306940">
        <id>Q04917</id>
    </interactant>
    <interactant intactId="EBI-7540603">
        <id>P67828</id>
        <label>CSNK1A1</label>
    </interactant>
    <organismsDiffer>true</organismsDiffer>
    <experiments>8</experiments>
</comment>
<comment type="interaction">
    <interactant intactId="EBI-306940">
        <id>Q04917</id>
    </interactant>
    <interactant intactId="EBI-6930266">
        <id>P61588</id>
        <label>Rnd3</label>
    </interactant>
    <organismsDiffer>true</organismsDiffer>
    <experiments>2</experiments>
</comment>
<comment type="tissue specificity">
    <text>Expressed mainly in the brain and present in other tissues albeit at lower levels.</text>
</comment>
<comment type="PTM">
    <text evidence="1">Phosphorylated on Ser-59 by protein kinase C delta type catalytic subunit in a sphingosine-dependent fashion.</text>
</comment>
<comment type="similarity">
    <text evidence="15">Belongs to the 14-3-3 family.</text>
</comment>